<dbReference type="EMBL" id="AL683816">
    <property type="status" value="NOT_ANNOTATED_CDS"/>
    <property type="molecule type" value="Genomic_DNA"/>
</dbReference>
<dbReference type="EMBL" id="AL772139">
    <property type="status" value="NOT_ANNOTATED_CDS"/>
    <property type="molecule type" value="Genomic_DNA"/>
</dbReference>
<dbReference type="CCDS" id="CCDS38815.1"/>
<dbReference type="RefSeq" id="NP_001074753.1">
    <property type="nucleotide sequence ID" value="NM_001081284.2"/>
</dbReference>
<dbReference type="RefSeq" id="XP_006503324.1">
    <property type="nucleotide sequence ID" value="XM_006503261.1"/>
</dbReference>
<dbReference type="FunCoup" id="A2AGB2">
    <property type="interactions" value="2"/>
</dbReference>
<dbReference type="STRING" id="10090.ENSMUSP00000102686"/>
<dbReference type="GlyGen" id="A2AGB2">
    <property type="glycosylation" value="1 site"/>
</dbReference>
<dbReference type="iPTMnet" id="A2AGB2"/>
<dbReference type="PhosphoSitePlus" id="A2AGB2"/>
<dbReference type="PaxDb" id="10090-ENSMUSP00000102686"/>
<dbReference type="ProteomicsDB" id="281721"/>
<dbReference type="Antibodypedia" id="33284">
    <property type="antibodies" value="76 antibodies from 13 providers"/>
</dbReference>
<dbReference type="Ensembl" id="ENSMUST00000107071.2">
    <property type="protein sequence ID" value="ENSMUSP00000102686.2"/>
    <property type="gene ID" value="ENSMUSG00000078639.2"/>
</dbReference>
<dbReference type="GeneID" id="620779"/>
<dbReference type="KEGG" id="mmu:620779"/>
<dbReference type="UCSC" id="uc008ttm.1">
    <property type="organism name" value="mouse"/>
</dbReference>
<dbReference type="AGR" id="MGI:3650206"/>
<dbReference type="MGI" id="MGI:3650206">
    <property type="gene designation" value="Gm12695"/>
</dbReference>
<dbReference type="VEuPathDB" id="HostDB:ENSMUSG00000078639"/>
<dbReference type="eggNOG" id="ENOG502RIAR">
    <property type="taxonomic scope" value="Eukaryota"/>
</dbReference>
<dbReference type="GeneTree" id="ENSGT00390000008678"/>
<dbReference type="HOGENOM" id="CLU_040182_0_0_1"/>
<dbReference type="InParanoid" id="A2AGB2"/>
<dbReference type="OMA" id="YVHGIPR"/>
<dbReference type="OrthoDB" id="9989690at2759"/>
<dbReference type="PhylomeDB" id="A2AGB2"/>
<dbReference type="TreeFam" id="TF338576"/>
<dbReference type="BioGRID-ORCS" id="620779">
    <property type="hits" value="2 hits in 71 CRISPR screens"/>
</dbReference>
<dbReference type="ChiTaRS" id="Gm12695">
    <property type="organism name" value="mouse"/>
</dbReference>
<dbReference type="PRO" id="PR:A2AGB2"/>
<dbReference type="Proteomes" id="UP000000589">
    <property type="component" value="Chromosome 4"/>
</dbReference>
<dbReference type="RNAct" id="A2AGB2">
    <property type="molecule type" value="protein"/>
</dbReference>
<dbReference type="Bgee" id="ENSMUSG00000078639">
    <property type="expression patterns" value="Expressed in spermatid and 7 other cell types or tissues"/>
</dbReference>
<dbReference type="InterPro" id="IPR040774">
    <property type="entry name" value="DUF5580"/>
</dbReference>
<dbReference type="InterPro" id="IPR049247">
    <property type="entry name" value="DUF5580_C"/>
</dbReference>
<dbReference type="InterPro" id="IPR049246">
    <property type="entry name" value="DUF5580_M"/>
</dbReference>
<dbReference type="InterPro" id="IPR048316">
    <property type="entry name" value="DUF5580_N"/>
</dbReference>
<dbReference type="InterPro" id="IPR011992">
    <property type="entry name" value="EF-hand-dom_pair"/>
</dbReference>
<dbReference type="PANTHER" id="PTHR34830:SF1">
    <property type="entry name" value="GENE 12695-RELATED"/>
    <property type="match status" value="1"/>
</dbReference>
<dbReference type="PANTHER" id="PTHR34830">
    <property type="entry name" value="SIMILAR TO HYPOTHETICAL PROTEIN MGC34837"/>
    <property type="match status" value="1"/>
</dbReference>
<dbReference type="Pfam" id="PF17743">
    <property type="entry name" value="DUF5580"/>
    <property type="match status" value="1"/>
</dbReference>
<dbReference type="Pfam" id="PF20743">
    <property type="entry name" value="DUF5580_C"/>
    <property type="match status" value="1"/>
</dbReference>
<dbReference type="Pfam" id="PF20742">
    <property type="entry name" value="DUF5580_M"/>
    <property type="match status" value="1"/>
</dbReference>
<dbReference type="SUPFAM" id="SSF47473">
    <property type="entry name" value="EF-hand"/>
    <property type="match status" value="1"/>
</dbReference>
<reference key="1">
    <citation type="journal article" date="2009" name="PLoS Biol.">
        <title>Lineage-specific biology revealed by a finished genome assembly of the mouse.</title>
        <authorList>
            <person name="Church D.M."/>
            <person name="Goodstadt L."/>
            <person name="Hillier L.W."/>
            <person name="Zody M.C."/>
            <person name="Goldstein S."/>
            <person name="She X."/>
            <person name="Bult C.J."/>
            <person name="Agarwala R."/>
            <person name="Cherry J.L."/>
            <person name="DiCuccio M."/>
            <person name="Hlavina W."/>
            <person name="Kapustin Y."/>
            <person name="Meric P."/>
            <person name="Maglott D."/>
            <person name="Birtle Z."/>
            <person name="Marques A.C."/>
            <person name="Graves T."/>
            <person name="Zhou S."/>
            <person name="Teague B."/>
            <person name="Potamousis K."/>
            <person name="Churas C."/>
            <person name="Place M."/>
            <person name="Herschleb J."/>
            <person name="Runnheim R."/>
            <person name="Forrest D."/>
            <person name="Amos-Landgraf J."/>
            <person name="Schwartz D.C."/>
            <person name="Cheng Z."/>
            <person name="Lindblad-Toh K."/>
            <person name="Eichler E.E."/>
            <person name="Ponting C.P."/>
        </authorList>
    </citation>
    <scope>NUCLEOTIDE SEQUENCE [LARGE SCALE GENOMIC DNA]</scope>
    <source>
        <strain>C57BL/6J</strain>
    </source>
</reference>
<name>CA087_MOUSE</name>
<feature type="chain" id="PRO_0000284490" description="Uncharacterized protein C1orf87 homolog">
    <location>
        <begin position="1"/>
        <end position="545"/>
    </location>
</feature>
<feature type="region of interest" description="Disordered" evidence="1">
    <location>
        <begin position="34"/>
        <end position="98"/>
    </location>
</feature>
<feature type="region of interest" description="Disordered" evidence="1">
    <location>
        <begin position="269"/>
        <end position="296"/>
    </location>
</feature>
<feature type="region of interest" description="Disordered" evidence="1">
    <location>
        <begin position="415"/>
        <end position="444"/>
    </location>
</feature>
<feature type="compositionally biased region" description="Basic and acidic residues" evidence="1">
    <location>
        <begin position="34"/>
        <end position="44"/>
    </location>
</feature>
<feature type="compositionally biased region" description="Basic and acidic residues" evidence="1">
    <location>
        <begin position="53"/>
        <end position="63"/>
    </location>
</feature>
<feature type="compositionally biased region" description="Polar residues" evidence="1">
    <location>
        <begin position="69"/>
        <end position="78"/>
    </location>
</feature>
<feature type="compositionally biased region" description="Basic and acidic residues" evidence="1">
    <location>
        <begin position="415"/>
        <end position="428"/>
    </location>
</feature>
<feature type="compositionally biased region" description="Polar residues" evidence="1">
    <location>
        <begin position="429"/>
        <end position="441"/>
    </location>
</feature>
<gene>
    <name type="primary">Gm12695</name>
</gene>
<sequence length="545" mass="62440">MSSPWKTSQSSVPMPEMIVKIVGSKHFRYFIEKPMNKQNEKLKTEPQTSLQKPRNDYSRRVSRDLPGPTDSSEQQITANPAEKEESKHQRSSLKPESNQKFLTRVFSNRFLDGRISYEANVHCSSVPTGDQSLSYMHSLPRRKSVGWCLEHTAKDSSGQAEEIVQRPSVMTREDSFLTTLVRRELNSRPLSSNLLDKLQKELKTLDPISSGFLHQSQLSCLFLRHKVPLPLLTVKLLCQRFSRRCSPEMVNYGEVLCFLKEATKDNLQQNGTAGYSNSRKTSSPSYHKQSIPPQDSSLLSEVNKSLLEILKMALRPCQGKLSIDCLNMSFRKEDHSFSGCLPLPKVISICSKHGLYVTMTLLETLLHHQELGYRGEIKWKNFVKWLNRASADLSCDMPAGKNKKETQGDLVDIPERPQRKTEHVKTPEENLQTKNPTTMTSAPEDPVTFFKNRPVSQPVEHLAVKKDGQSELWIDRFRKLENALYLCDLSNTGVLERERARRLIHNYNLIYSLSLSPRRINQALQRYRSGENIILEPALQYLKEL</sequence>
<evidence type="ECO:0000256" key="1">
    <source>
        <dbReference type="SAM" id="MobiDB-lite"/>
    </source>
</evidence>
<keyword id="KW-1185">Reference proteome</keyword>
<organism>
    <name type="scientific">Mus musculus</name>
    <name type="common">Mouse</name>
    <dbReference type="NCBI Taxonomy" id="10090"/>
    <lineage>
        <taxon>Eukaryota</taxon>
        <taxon>Metazoa</taxon>
        <taxon>Chordata</taxon>
        <taxon>Craniata</taxon>
        <taxon>Vertebrata</taxon>
        <taxon>Euteleostomi</taxon>
        <taxon>Mammalia</taxon>
        <taxon>Eutheria</taxon>
        <taxon>Euarchontoglires</taxon>
        <taxon>Glires</taxon>
        <taxon>Rodentia</taxon>
        <taxon>Myomorpha</taxon>
        <taxon>Muroidea</taxon>
        <taxon>Muridae</taxon>
        <taxon>Murinae</taxon>
        <taxon>Mus</taxon>
        <taxon>Mus</taxon>
    </lineage>
</organism>
<accession>A2AGB2</accession>
<protein>
    <recommendedName>
        <fullName>Uncharacterized protein C1orf87 homolog</fullName>
    </recommendedName>
</protein>
<proteinExistence type="predicted"/>